<feature type="chain" id="PRO_0000309635" description="Hydroxyacylglutathione hydrolase">
    <location>
        <begin position="1"/>
        <end position="257"/>
    </location>
</feature>
<feature type="binding site" evidence="1">
    <location>
        <position position="58"/>
    </location>
    <ligand>
        <name>Zn(2+)</name>
        <dbReference type="ChEBI" id="CHEBI:29105"/>
        <label>1</label>
    </ligand>
</feature>
<feature type="binding site" evidence="1">
    <location>
        <position position="60"/>
    </location>
    <ligand>
        <name>Zn(2+)</name>
        <dbReference type="ChEBI" id="CHEBI:29105"/>
        <label>1</label>
    </ligand>
</feature>
<feature type="binding site" evidence="1">
    <location>
        <position position="62"/>
    </location>
    <ligand>
        <name>Zn(2+)</name>
        <dbReference type="ChEBI" id="CHEBI:29105"/>
        <label>2</label>
    </ligand>
</feature>
<feature type="binding site" evidence="1">
    <location>
        <position position="63"/>
    </location>
    <ligand>
        <name>Zn(2+)</name>
        <dbReference type="ChEBI" id="CHEBI:29105"/>
        <label>2</label>
    </ligand>
</feature>
<feature type="binding site" evidence="1">
    <location>
        <position position="116"/>
    </location>
    <ligand>
        <name>Zn(2+)</name>
        <dbReference type="ChEBI" id="CHEBI:29105"/>
        <label>1</label>
    </ligand>
</feature>
<feature type="binding site" evidence="1">
    <location>
        <position position="135"/>
    </location>
    <ligand>
        <name>Zn(2+)</name>
        <dbReference type="ChEBI" id="CHEBI:29105"/>
        <label>1</label>
    </ligand>
</feature>
<feature type="binding site" evidence="1">
    <location>
        <position position="135"/>
    </location>
    <ligand>
        <name>Zn(2+)</name>
        <dbReference type="ChEBI" id="CHEBI:29105"/>
        <label>2</label>
    </ligand>
</feature>
<feature type="binding site" evidence="1">
    <location>
        <position position="173"/>
    </location>
    <ligand>
        <name>Zn(2+)</name>
        <dbReference type="ChEBI" id="CHEBI:29105"/>
        <label>2</label>
    </ligand>
</feature>
<protein>
    <recommendedName>
        <fullName evidence="1">Hydroxyacylglutathione hydrolase</fullName>
        <ecNumber evidence="1">3.1.2.6</ecNumber>
    </recommendedName>
    <alternativeName>
        <fullName evidence="1">Glyoxalase II</fullName>
        <shortName evidence="1">Glx II</shortName>
    </alternativeName>
</protein>
<organism>
    <name type="scientific">Brucella suis biovar 1 (strain 1330)</name>
    <dbReference type="NCBI Taxonomy" id="204722"/>
    <lineage>
        <taxon>Bacteria</taxon>
        <taxon>Pseudomonadati</taxon>
        <taxon>Pseudomonadota</taxon>
        <taxon>Alphaproteobacteria</taxon>
        <taxon>Hyphomicrobiales</taxon>
        <taxon>Brucellaceae</taxon>
        <taxon>Brucella/Ochrobactrum group</taxon>
        <taxon>Brucella</taxon>
    </lineage>
</organism>
<gene>
    <name evidence="1" type="primary">gloB</name>
    <name type="ordered locus">BR1936</name>
    <name type="ordered locus">BS1330_I1930</name>
</gene>
<accession>Q8FYE7</accession>
<accession>G0K879</accession>
<reference key="1">
    <citation type="journal article" date="2002" name="Proc. Natl. Acad. Sci. U.S.A.">
        <title>The Brucella suis genome reveals fundamental similarities between animal and plant pathogens and symbionts.</title>
        <authorList>
            <person name="Paulsen I.T."/>
            <person name="Seshadri R."/>
            <person name="Nelson K.E."/>
            <person name="Eisen J.A."/>
            <person name="Heidelberg J.F."/>
            <person name="Read T.D."/>
            <person name="Dodson R.J."/>
            <person name="Umayam L.A."/>
            <person name="Brinkac L.M."/>
            <person name="Beanan M.J."/>
            <person name="Daugherty S.C."/>
            <person name="DeBoy R.T."/>
            <person name="Durkin A.S."/>
            <person name="Kolonay J.F."/>
            <person name="Madupu R."/>
            <person name="Nelson W.C."/>
            <person name="Ayodeji B."/>
            <person name="Kraul M."/>
            <person name="Shetty J."/>
            <person name="Malek J.A."/>
            <person name="Van Aken S.E."/>
            <person name="Riedmuller S."/>
            <person name="Tettelin H."/>
            <person name="Gill S.R."/>
            <person name="White O."/>
            <person name="Salzberg S.L."/>
            <person name="Hoover D.L."/>
            <person name="Lindler L.E."/>
            <person name="Halling S.M."/>
            <person name="Boyle S.M."/>
            <person name="Fraser C.M."/>
        </authorList>
    </citation>
    <scope>NUCLEOTIDE SEQUENCE [LARGE SCALE GENOMIC DNA]</scope>
    <source>
        <strain>1330</strain>
    </source>
</reference>
<reference key="2">
    <citation type="journal article" date="2011" name="J. Bacteriol.">
        <title>Revised genome sequence of Brucella suis 1330.</title>
        <authorList>
            <person name="Tae H."/>
            <person name="Shallom S."/>
            <person name="Settlage R."/>
            <person name="Preston D."/>
            <person name="Adams L.G."/>
            <person name="Garner H.R."/>
        </authorList>
    </citation>
    <scope>NUCLEOTIDE SEQUENCE [LARGE SCALE GENOMIC DNA]</scope>
    <source>
        <strain>1330</strain>
    </source>
</reference>
<keyword id="KW-0378">Hydrolase</keyword>
<keyword id="KW-0479">Metal-binding</keyword>
<keyword id="KW-0862">Zinc</keyword>
<sequence length="257" mass="28716">MEQRLEIEQFICRSDNYGVLIHDPESALTATIDAPDAYAIEAALERRGWTLDFIFTTHHHLDHVEGNEPLKEKFGVSIIGPEAEKAKIPGIDRTVKGGDEFTFGLFKVKVISTPGHTAGGISYYLPDAKVVFTGDTLFALGCGRLFEGTPATMFHSLEKLVALPGDTALYCGHEYTQNNARFALTIDPDNSALKERAKEIARLRAHERMTLPSTIALEMATNPFLRWHDRTIRARLGLQDAPDEAVFAEIRKRKDMF</sequence>
<evidence type="ECO:0000255" key="1">
    <source>
        <dbReference type="HAMAP-Rule" id="MF_01374"/>
    </source>
</evidence>
<name>GLO2_BRUSU</name>
<proteinExistence type="inferred from homology"/>
<dbReference type="EC" id="3.1.2.6" evidence="1"/>
<dbReference type="EMBL" id="AE014291">
    <property type="protein sequence ID" value="AAN30828.1"/>
    <property type="molecule type" value="Genomic_DNA"/>
</dbReference>
<dbReference type="EMBL" id="CP002997">
    <property type="protein sequence ID" value="AEM19245.1"/>
    <property type="molecule type" value="Genomic_DNA"/>
</dbReference>
<dbReference type="PIR" id="AD3268">
    <property type="entry name" value="AD3268"/>
</dbReference>
<dbReference type="SMR" id="Q8FYE7"/>
<dbReference type="KEGG" id="bms:BR1936"/>
<dbReference type="KEGG" id="bsi:BS1330_I1930"/>
<dbReference type="HOGENOM" id="CLU_030571_4_1_5"/>
<dbReference type="UniPathway" id="UPA00619">
    <property type="reaction ID" value="UER00676"/>
</dbReference>
<dbReference type="Proteomes" id="UP000007104">
    <property type="component" value="Chromosome I"/>
</dbReference>
<dbReference type="GO" id="GO:0004416">
    <property type="term" value="F:hydroxyacylglutathione hydrolase activity"/>
    <property type="evidence" value="ECO:0007669"/>
    <property type="project" value="UniProtKB-UniRule"/>
</dbReference>
<dbReference type="GO" id="GO:0046872">
    <property type="term" value="F:metal ion binding"/>
    <property type="evidence" value="ECO:0007669"/>
    <property type="project" value="UniProtKB-KW"/>
</dbReference>
<dbReference type="GO" id="GO:0019243">
    <property type="term" value="P:methylglyoxal catabolic process to D-lactate via S-lactoyl-glutathione"/>
    <property type="evidence" value="ECO:0007669"/>
    <property type="project" value="InterPro"/>
</dbReference>
<dbReference type="CDD" id="cd07723">
    <property type="entry name" value="hydroxyacylglutathione_hydrolase_MBL-fold"/>
    <property type="match status" value="1"/>
</dbReference>
<dbReference type="Gene3D" id="3.60.15.10">
    <property type="entry name" value="Ribonuclease Z/Hydroxyacylglutathione hydrolase-like"/>
    <property type="match status" value="1"/>
</dbReference>
<dbReference type="HAMAP" id="MF_01374">
    <property type="entry name" value="Glyoxalase_2"/>
    <property type="match status" value="1"/>
</dbReference>
<dbReference type="InterPro" id="IPR035680">
    <property type="entry name" value="Clx_II_MBL"/>
</dbReference>
<dbReference type="InterPro" id="IPR050110">
    <property type="entry name" value="Glyoxalase_II_hydrolase"/>
</dbReference>
<dbReference type="InterPro" id="IPR032282">
    <property type="entry name" value="HAGH_C"/>
</dbReference>
<dbReference type="InterPro" id="IPR017782">
    <property type="entry name" value="Hydroxyacylglutathione_Hdrlase"/>
</dbReference>
<dbReference type="InterPro" id="IPR001279">
    <property type="entry name" value="Metallo-B-lactamas"/>
</dbReference>
<dbReference type="InterPro" id="IPR036866">
    <property type="entry name" value="RibonucZ/Hydroxyglut_hydro"/>
</dbReference>
<dbReference type="NCBIfam" id="TIGR03413">
    <property type="entry name" value="GSH_gloB"/>
    <property type="match status" value="1"/>
</dbReference>
<dbReference type="PANTHER" id="PTHR43705">
    <property type="entry name" value="HYDROXYACYLGLUTATHIONE HYDROLASE"/>
    <property type="match status" value="1"/>
</dbReference>
<dbReference type="PANTHER" id="PTHR43705:SF1">
    <property type="entry name" value="HYDROXYACYLGLUTATHIONE HYDROLASE GLOB"/>
    <property type="match status" value="1"/>
</dbReference>
<dbReference type="Pfam" id="PF16123">
    <property type="entry name" value="HAGH_C"/>
    <property type="match status" value="1"/>
</dbReference>
<dbReference type="Pfam" id="PF00753">
    <property type="entry name" value="Lactamase_B"/>
    <property type="match status" value="1"/>
</dbReference>
<dbReference type="PIRSF" id="PIRSF005457">
    <property type="entry name" value="Glx"/>
    <property type="match status" value="1"/>
</dbReference>
<dbReference type="SMART" id="SM00849">
    <property type="entry name" value="Lactamase_B"/>
    <property type="match status" value="1"/>
</dbReference>
<dbReference type="SUPFAM" id="SSF56281">
    <property type="entry name" value="Metallo-hydrolase/oxidoreductase"/>
    <property type="match status" value="1"/>
</dbReference>
<comment type="function">
    <text evidence="1">Thiolesterase that catalyzes the hydrolysis of S-D-lactoyl-glutathione to form glutathione and D-lactic acid.</text>
</comment>
<comment type="catalytic activity">
    <reaction evidence="1">
        <text>an S-(2-hydroxyacyl)glutathione + H2O = a 2-hydroxy carboxylate + glutathione + H(+)</text>
        <dbReference type="Rhea" id="RHEA:21864"/>
        <dbReference type="ChEBI" id="CHEBI:15377"/>
        <dbReference type="ChEBI" id="CHEBI:15378"/>
        <dbReference type="ChEBI" id="CHEBI:57925"/>
        <dbReference type="ChEBI" id="CHEBI:58896"/>
        <dbReference type="ChEBI" id="CHEBI:71261"/>
        <dbReference type="EC" id="3.1.2.6"/>
    </reaction>
</comment>
<comment type="cofactor">
    <cofactor evidence="1">
        <name>Zn(2+)</name>
        <dbReference type="ChEBI" id="CHEBI:29105"/>
    </cofactor>
    <text evidence="1">Binds 2 Zn(2+) ions per subunit.</text>
</comment>
<comment type="pathway">
    <text evidence="1">Secondary metabolite metabolism; methylglyoxal degradation; (R)-lactate from methylglyoxal: step 2/2.</text>
</comment>
<comment type="subunit">
    <text evidence="1">Monomer.</text>
</comment>
<comment type="similarity">
    <text evidence="1">Belongs to the metallo-beta-lactamase superfamily. Glyoxalase II family.</text>
</comment>